<gene>
    <name evidence="1" type="primary">rplA</name>
    <name type="ordered locus">Hore_01060</name>
</gene>
<sequence length="235" mass="25490">MAKHGKRYQESRKKVDREKLYSPADALELVKDIASANFDETVDLAVKLGVDPKHADQNVRGAVVLPKGTGKEVKVIVFAKGEKAKEAEEAGADVVGADDLAEKIKGGWLDFDVAIATPDMMSVVGKLGRILGPKGLMPNPKVGTVTFELEKAVKDAKAGKIEYRVDKNGNIHLPIGKVSFPVDDLMENFKTIIDVLLRERPASAKGRYMRSVTVSSTMGPGIKVDPNQAIDLIRK</sequence>
<evidence type="ECO:0000255" key="1">
    <source>
        <dbReference type="HAMAP-Rule" id="MF_01318"/>
    </source>
</evidence>
<evidence type="ECO:0000305" key="2"/>
<organism>
    <name type="scientific">Halothermothrix orenii (strain H 168 / OCM 544 / DSM 9562)</name>
    <dbReference type="NCBI Taxonomy" id="373903"/>
    <lineage>
        <taxon>Bacteria</taxon>
        <taxon>Bacillati</taxon>
        <taxon>Bacillota</taxon>
        <taxon>Clostridia</taxon>
        <taxon>Halanaerobiales</taxon>
        <taxon>Halothermotrichaceae</taxon>
        <taxon>Halothermothrix</taxon>
    </lineage>
</organism>
<dbReference type="EMBL" id="CP001098">
    <property type="protein sequence ID" value="ACL68867.1"/>
    <property type="molecule type" value="Genomic_DNA"/>
</dbReference>
<dbReference type="RefSeq" id="WP_012635066.1">
    <property type="nucleotide sequence ID" value="NC_011899.1"/>
</dbReference>
<dbReference type="SMR" id="B8D0B3"/>
<dbReference type="STRING" id="373903.Hore_01060"/>
<dbReference type="KEGG" id="hor:Hore_01060"/>
<dbReference type="eggNOG" id="COG0081">
    <property type="taxonomic scope" value="Bacteria"/>
</dbReference>
<dbReference type="HOGENOM" id="CLU_062853_0_0_9"/>
<dbReference type="OrthoDB" id="9803740at2"/>
<dbReference type="Proteomes" id="UP000000719">
    <property type="component" value="Chromosome"/>
</dbReference>
<dbReference type="GO" id="GO:0015934">
    <property type="term" value="C:large ribosomal subunit"/>
    <property type="evidence" value="ECO:0007669"/>
    <property type="project" value="InterPro"/>
</dbReference>
<dbReference type="GO" id="GO:0019843">
    <property type="term" value="F:rRNA binding"/>
    <property type="evidence" value="ECO:0007669"/>
    <property type="project" value="UniProtKB-UniRule"/>
</dbReference>
<dbReference type="GO" id="GO:0003735">
    <property type="term" value="F:structural constituent of ribosome"/>
    <property type="evidence" value="ECO:0007669"/>
    <property type="project" value="InterPro"/>
</dbReference>
<dbReference type="GO" id="GO:0000049">
    <property type="term" value="F:tRNA binding"/>
    <property type="evidence" value="ECO:0007669"/>
    <property type="project" value="UniProtKB-KW"/>
</dbReference>
<dbReference type="GO" id="GO:0006417">
    <property type="term" value="P:regulation of translation"/>
    <property type="evidence" value="ECO:0007669"/>
    <property type="project" value="UniProtKB-KW"/>
</dbReference>
<dbReference type="GO" id="GO:0006412">
    <property type="term" value="P:translation"/>
    <property type="evidence" value="ECO:0007669"/>
    <property type="project" value="UniProtKB-UniRule"/>
</dbReference>
<dbReference type="CDD" id="cd00403">
    <property type="entry name" value="Ribosomal_L1"/>
    <property type="match status" value="1"/>
</dbReference>
<dbReference type="FunFam" id="3.40.50.790:FF:000001">
    <property type="entry name" value="50S ribosomal protein L1"/>
    <property type="match status" value="1"/>
</dbReference>
<dbReference type="Gene3D" id="3.30.190.20">
    <property type="match status" value="1"/>
</dbReference>
<dbReference type="Gene3D" id="3.40.50.790">
    <property type="match status" value="1"/>
</dbReference>
<dbReference type="HAMAP" id="MF_01318_B">
    <property type="entry name" value="Ribosomal_uL1_B"/>
    <property type="match status" value="1"/>
</dbReference>
<dbReference type="InterPro" id="IPR005878">
    <property type="entry name" value="Ribosom_uL1_bac-type"/>
</dbReference>
<dbReference type="InterPro" id="IPR002143">
    <property type="entry name" value="Ribosomal_uL1"/>
</dbReference>
<dbReference type="InterPro" id="IPR023674">
    <property type="entry name" value="Ribosomal_uL1-like"/>
</dbReference>
<dbReference type="InterPro" id="IPR028364">
    <property type="entry name" value="Ribosomal_uL1/biogenesis"/>
</dbReference>
<dbReference type="InterPro" id="IPR016095">
    <property type="entry name" value="Ribosomal_uL1_3-a/b-sand"/>
</dbReference>
<dbReference type="InterPro" id="IPR023673">
    <property type="entry name" value="Ribosomal_uL1_CS"/>
</dbReference>
<dbReference type="NCBIfam" id="TIGR01169">
    <property type="entry name" value="rplA_bact"/>
    <property type="match status" value="1"/>
</dbReference>
<dbReference type="PANTHER" id="PTHR36427">
    <property type="entry name" value="54S RIBOSOMAL PROTEIN L1, MITOCHONDRIAL"/>
    <property type="match status" value="1"/>
</dbReference>
<dbReference type="PANTHER" id="PTHR36427:SF3">
    <property type="entry name" value="LARGE RIBOSOMAL SUBUNIT PROTEIN UL1M"/>
    <property type="match status" value="1"/>
</dbReference>
<dbReference type="Pfam" id="PF00687">
    <property type="entry name" value="Ribosomal_L1"/>
    <property type="match status" value="1"/>
</dbReference>
<dbReference type="PIRSF" id="PIRSF002155">
    <property type="entry name" value="Ribosomal_L1"/>
    <property type="match status" value="1"/>
</dbReference>
<dbReference type="SUPFAM" id="SSF56808">
    <property type="entry name" value="Ribosomal protein L1"/>
    <property type="match status" value="1"/>
</dbReference>
<dbReference type="PROSITE" id="PS01199">
    <property type="entry name" value="RIBOSOMAL_L1"/>
    <property type="match status" value="1"/>
</dbReference>
<comment type="function">
    <text evidence="1">Binds directly to 23S rRNA. The L1 stalk is quite mobile in the ribosome, and is involved in E site tRNA release.</text>
</comment>
<comment type="function">
    <text evidence="1">Protein L1 is also a translational repressor protein, it controls the translation of the L11 operon by binding to its mRNA.</text>
</comment>
<comment type="subunit">
    <text evidence="1">Part of the 50S ribosomal subunit.</text>
</comment>
<comment type="similarity">
    <text evidence="1">Belongs to the universal ribosomal protein uL1 family.</text>
</comment>
<feature type="chain" id="PRO_1000165684" description="Large ribosomal subunit protein uL1">
    <location>
        <begin position="1"/>
        <end position="235"/>
    </location>
</feature>
<reference key="1">
    <citation type="journal article" date="2009" name="PLoS ONE">
        <title>Genome analysis of the anaerobic thermohalophilic bacterium Halothermothrix orenii.</title>
        <authorList>
            <person name="Mavromatis K."/>
            <person name="Ivanova N."/>
            <person name="Anderson I."/>
            <person name="Lykidis A."/>
            <person name="Hooper S.D."/>
            <person name="Sun H."/>
            <person name="Kunin V."/>
            <person name="Lapidus A."/>
            <person name="Hugenholtz P."/>
            <person name="Patel B."/>
            <person name="Kyrpides N.C."/>
        </authorList>
    </citation>
    <scope>NUCLEOTIDE SEQUENCE [LARGE SCALE GENOMIC DNA]</scope>
    <source>
        <strain>H 168 / OCM 544 / DSM 9562</strain>
    </source>
</reference>
<protein>
    <recommendedName>
        <fullName evidence="1">Large ribosomal subunit protein uL1</fullName>
    </recommendedName>
    <alternativeName>
        <fullName evidence="2">50S ribosomal protein L1</fullName>
    </alternativeName>
</protein>
<proteinExistence type="inferred from homology"/>
<keyword id="KW-1185">Reference proteome</keyword>
<keyword id="KW-0678">Repressor</keyword>
<keyword id="KW-0687">Ribonucleoprotein</keyword>
<keyword id="KW-0689">Ribosomal protein</keyword>
<keyword id="KW-0694">RNA-binding</keyword>
<keyword id="KW-0699">rRNA-binding</keyword>
<keyword id="KW-0810">Translation regulation</keyword>
<keyword id="KW-0820">tRNA-binding</keyword>
<name>RL1_HALOH</name>
<accession>B8D0B3</accession>